<gene>
    <name evidence="1" type="primary">aroL</name>
    <name type="ordered locus">YPTB0911</name>
</gene>
<dbReference type="EC" id="2.7.1.71" evidence="1"/>
<dbReference type="EMBL" id="BX936398">
    <property type="protein sequence ID" value="CAH20151.1"/>
    <property type="molecule type" value="Genomic_DNA"/>
</dbReference>
<dbReference type="RefSeq" id="WP_011191851.1">
    <property type="nucleotide sequence ID" value="NC_006155.1"/>
</dbReference>
<dbReference type="SMR" id="Q66DY2"/>
<dbReference type="GeneID" id="49787035"/>
<dbReference type="KEGG" id="ypo:BZ17_1636"/>
<dbReference type="KEGG" id="yps:YPTB0911"/>
<dbReference type="PATRIC" id="fig|273123.14.peg.1736"/>
<dbReference type="UniPathway" id="UPA00053">
    <property type="reaction ID" value="UER00088"/>
</dbReference>
<dbReference type="Proteomes" id="UP000001011">
    <property type="component" value="Chromosome"/>
</dbReference>
<dbReference type="GO" id="GO:0005829">
    <property type="term" value="C:cytosol"/>
    <property type="evidence" value="ECO:0007669"/>
    <property type="project" value="TreeGrafter"/>
</dbReference>
<dbReference type="GO" id="GO:0005524">
    <property type="term" value="F:ATP binding"/>
    <property type="evidence" value="ECO:0007669"/>
    <property type="project" value="UniProtKB-UniRule"/>
</dbReference>
<dbReference type="GO" id="GO:0000287">
    <property type="term" value="F:magnesium ion binding"/>
    <property type="evidence" value="ECO:0007669"/>
    <property type="project" value="UniProtKB-UniRule"/>
</dbReference>
<dbReference type="GO" id="GO:0004765">
    <property type="term" value="F:shikimate kinase activity"/>
    <property type="evidence" value="ECO:0007669"/>
    <property type="project" value="UniProtKB-UniRule"/>
</dbReference>
<dbReference type="GO" id="GO:0008652">
    <property type="term" value="P:amino acid biosynthetic process"/>
    <property type="evidence" value="ECO:0007669"/>
    <property type="project" value="UniProtKB-KW"/>
</dbReference>
<dbReference type="GO" id="GO:0009073">
    <property type="term" value="P:aromatic amino acid family biosynthetic process"/>
    <property type="evidence" value="ECO:0007669"/>
    <property type="project" value="UniProtKB-KW"/>
</dbReference>
<dbReference type="GO" id="GO:0009423">
    <property type="term" value="P:chorismate biosynthetic process"/>
    <property type="evidence" value="ECO:0007669"/>
    <property type="project" value="UniProtKB-UniRule"/>
</dbReference>
<dbReference type="CDD" id="cd00464">
    <property type="entry name" value="SK"/>
    <property type="match status" value="1"/>
</dbReference>
<dbReference type="Gene3D" id="3.40.50.300">
    <property type="entry name" value="P-loop containing nucleotide triphosphate hydrolases"/>
    <property type="match status" value="1"/>
</dbReference>
<dbReference type="HAMAP" id="MF_00109">
    <property type="entry name" value="Shikimate_kinase"/>
    <property type="match status" value="1"/>
</dbReference>
<dbReference type="HAMAP" id="MF_01269">
    <property type="entry name" value="Shikimate_kinase_2"/>
    <property type="match status" value="1"/>
</dbReference>
<dbReference type="InterPro" id="IPR027417">
    <property type="entry name" value="P-loop_NTPase"/>
</dbReference>
<dbReference type="InterPro" id="IPR031322">
    <property type="entry name" value="Shikimate/glucono_kinase"/>
</dbReference>
<dbReference type="InterPro" id="IPR000623">
    <property type="entry name" value="Shikimate_kinase/TSH1"/>
</dbReference>
<dbReference type="InterPro" id="IPR027544">
    <property type="entry name" value="Shikimate_kinase_2"/>
</dbReference>
<dbReference type="InterPro" id="IPR023000">
    <property type="entry name" value="Shikimate_kinase_CS"/>
</dbReference>
<dbReference type="NCBIfam" id="NF002988">
    <property type="entry name" value="PRK03731.1"/>
    <property type="match status" value="1"/>
</dbReference>
<dbReference type="PANTHER" id="PTHR21087">
    <property type="entry name" value="SHIKIMATE KINASE"/>
    <property type="match status" value="1"/>
</dbReference>
<dbReference type="PANTHER" id="PTHR21087:SF21">
    <property type="entry name" value="SHIKIMATE KINASE 2"/>
    <property type="match status" value="1"/>
</dbReference>
<dbReference type="Pfam" id="PF01202">
    <property type="entry name" value="SKI"/>
    <property type="match status" value="1"/>
</dbReference>
<dbReference type="PRINTS" id="PR01100">
    <property type="entry name" value="SHIKIMTKNASE"/>
</dbReference>
<dbReference type="SUPFAM" id="SSF52540">
    <property type="entry name" value="P-loop containing nucleoside triphosphate hydrolases"/>
    <property type="match status" value="1"/>
</dbReference>
<dbReference type="PROSITE" id="PS01128">
    <property type="entry name" value="SHIKIMATE_KINASE"/>
    <property type="match status" value="1"/>
</dbReference>
<keyword id="KW-0028">Amino-acid biosynthesis</keyword>
<keyword id="KW-0057">Aromatic amino acid biosynthesis</keyword>
<keyword id="KW-0067">ATP-binding</keyword>
<keyword id="KW-0963">Cytoplasm</keyword>
<keyword id="KW-0418">Kinase</keyword>
<keyword id="KW-0460">Magnesium</keyword>
<keyword id="KW-0479">Metal-binding</keyword>
<keyword id="KW-0547">Nucleotide-binding</keyword>
<keyword id="KW-0808">Transferase</keyword>
<sequence length="174" mass="18896">MTQTIFMVGARGAGKTTIGKALAQALGYRFVDTDLFMQQTSQMTVAEVVESEGWDGFRLRESMALQAVTAPKTVIATGGGAVLSSENRAFMRDHGRVIYLRASAAVLAKRLAEDPEEAQRPSLTGKPIVEEMLDVLASREALYQDVAHHVLDGTQTPSLVVEQILQMLTGEMVK</sequence>
<comment type="function">
    <text evidence="1">Catalyzes the specific phosphorylation of the 3-hydroxyl group of shikimic acid using ATP as a cosubstrate.</text>
</comment>
<comment type="catalytic activity">
    <reaction evidence="1">
        <text>shikimate + ATP = 3-phosphoshikimate + ADP + H(+)</text>
        <dbReference type="Rhea" id="RHEA:13121"/>
        <dbReference type="ChEBI" id="CHEBI:15378"/>
        <dbReference type="ChEBI" id="CHEBI:30616"/>
        <dbReference type="ChEBI" id="CHEBI:36208"/>
        <dbReference type="ChEBI" id="CHEBI:145989"/>
        <dbReference type="ChEBI" id="CHEBI:456216"/>
        <dbReference type="EC" id="2.7.1.71"/>
    </reaction>
</comment>
<comment type="cofactor">
    <cofactor evidence="1">
        <name>Mg(2+)</name>
        <dbReference type="ChEBI" id="CHEBI:18420"/>
    </cofactor>
    <text evidence="1">Binds 1 Mg(2+) ion per subunit.</text>
</comment>
<comment type="pathway">
    <text evidence="1">Metabolic intermediate biosynthesis; chorismate biosynthesis; chorismate from D-erythrose 4-phosphate and phosphoenolpyruvate: step 5/7.</text>
</comment>
<comment type="subunit">
    <text evidence="1">Monomer.</text>
</comment>
<comment type="subcellular location">
    <subcellularLocation>
        <location evidence="1">Cytoplasm</location>
    </subcellularLocation>
</comment>
<comment type="domain">
    <text evidence="1">The LID domain closes over the active site upon ATP binding.</text>
</comment>
<comment type="similarity">
    <text evidence="1">Belongs to the shikimate kinase family. AroL subfamily.</text>
</comment>
<reference key="1">
    <citation type="journal article" date="2004" name="Proc. Natl. Acad. Sci. U.S.A.">
        <title>Insights into the evolution of Yersinia pestis through whole-genome comparison with Yersinia pseudotuberculosis.</title>
        <authorList>
            <person name="Chain P.S.G."/>
            <person name="Carniel E."/>
            <person name="Larimer F.W."/>
            <person name="Lamerdin J."/>
            <person name="Stoutland P.O."/>
            <person name="Regala W.M."/>
            <person name="Georgescu A.M."/>
            <person name="Vergez L.M."/>
            <person name="Land M.L."/>
            <person name="Motin V.L."/>
            <person name="Brubaker R.R."/>
            <person name="Fowler J."/>
            <person name="Hinnebusch J."/>
            <person name="Marceau M."/>
            <person name="Medigue C."/>
            <person name="Simonet M."/>
            <person name="Chenal-Francisque V."/>
            <person name="Souza B."/>
            <person name="Dacheux D."/>
            <person name="Elliott J.M."/>
            <person name="Derbise A."/>
            <person name="Hauser L.J."/>
            <person name="Garcia E."/>
        </authorList>
    </citation>
    <scope>NUCLEOTIDE SEQUENCE [LARGE SCALE GENOMIC DNA]</scope>
    <source>
        <strain>IP32953</strain>
    </source>
</reference>
<evidence type="ECO:0000255" key="1">
    <source>
        <dbReference type="HAMAP-Rule" id="MF_01269"/>
    </source>
</evidence>
<accession>Q66DY2</accession>
<organism>
    <name type="scientific">Yersinia pseudotuberculosis serotype I (strain IP32953)</name>
    <dbReference type="NCBI Taxonomy" id="273123"/>
    <lineage>
        <taxon>Bacteria</taxon>
        <taxon>Pseudomonadati</taxon>
        <taxon>Pseudomonadota</taxon>
        <taxon>Gammaproteobacteria</taxon>
        <taxon>Enterobacterales</taxon>
        <taxon>Yersiniaceae</taxon>
        <taxon>Yersinia</taxon>
    </lineage>
</organism>
<name>AROL_YERPS</name>
<protein>
    <recommendedName>
        <fullName evidence="1">Shikimate kinase 2</fullName>
        <shortName evidence="1">SK 2</shortName>
        <ecNumber evidence="1">2.7.1.71</ecNumber>
    </recommendedName>
</protein>
<proteinExistence type="inferred from homology"/>
<feature type="chain" id="PRO_0000237964" description="Shikimate kinase 2">
    <location>
        <begin position="1"/>
        <end position="174"/>
    </location>
</feature>
<feature type="region of interest" description="LID domain">
    <location>
        <begin position="112"/>
        <end position="126"/>
    </location>
</feature>
<feature type="binding site" evidence="1">
    <location>
        <begin position="12"/>
        <end position="17"/>
    </location>
    <ligand>
        <name>ATP</name>
        <dbReference type="ChEBI" id="CHEBI:30616"/>
    </ligand>
</feature>
<feature type="binding site" evidence="1">
    <location>
        <position position="16"/>
    </location>
    <ligand>
        <name>Mg(2+)</name>
        <dbReference type="ChEBI" id="CHEBI:18420"/>
    </ligand>
</feature>
<feature type="binding site" evidence="1">
    <location>
        <position position="32"/>
    </location>
    <ligand>
        <name>Mg(2+)</name>
        <dbReference type="ChEBI" id="CHEBI:18420"/>
    </ligand>
</feature>
<feature type="binding site" evidence="1">
    <location>
        <position position="34"/>
    </location>
    <ligand>
        <name>substrate</name>
    </ligand>
</feature>
<feature type="binding site" evidence="1">
    <location>
        <position position="58"/>
    </location>
    <ligand>
        <name>substrate</name>
    </ligand>
</feature>
<feature type="binding site" evidence="1">
    <location>
        <position position="79"/>
    </location>
    <ligand>
        <name>substrate</name>
    </ligand>
</feature>
<feature type="binding site" evidence="1">
    <location>
        <position position="120"/>
    </location>
    <ligand>
        <name>ATP</name>
        <dbReference type="ChEBI" id="CHEBI:30616"/>
    </ligand>
</feature>
<feature type="binding site" evidence="1">
    <location>
        <position position="139"/>
    </location>
    <ligand>
        <name>substrate</name>
    </ligand>
</feature>
<feature type="binding site" evidence="1">
    <location>
        <position position="155"/>
    </location>
    <ligand>
        <name>ATP</name>
        <dbReference type="ChEBI" id="CHEBI:30616"/>
    </ligand>
</feature>